<protein>
    <recommendedName>
        <fullName evidence="1">Protein Tpen_0748</fullName>
    </recommendedName>
</protein>
<organism>
    <name type="scientific">Thermofilum pendens (strain DSM 2475 / Hrk 5)</name>
    <dbReference type="NCBI Taxonomy" id="368408"/>
    <lineage>
        <taxon>Archaea</taxon>
        <taxon>Thermoproteota</taxon>
        <taxon>Thermoprotei</taxon>
        <taxon>Thermofilales</taxon>
        <taxon>Thermofilaceae</taxon>
        <taxon>Thermofilum</taxon>
    </lineage>
</organism>
<gene>
    <name type="ordered locus">Tpen_0748</name>
</gene>
<reference key="1">
    <citation type="journal article" date="2008" name="J. Bacteriol.">
        <title>Genome sequence of Thermofilum pendens reveals an exceptional loss of biosynthetic pathways without genome reduction.</title>
        <authorList>
            <person name="Anderson I."/>
            <person name="Rodriguez J."/>
            <person name="Susanti D."/>
            <person name="Porat I."/>
            <person name="Reich C."/>
            <person name="Ulrich L.E."/>
            <person name="Elkins J.G."/>
            <person name="Mavromatis K."/>
            <person name="Lykidis A."/>
            <person name="Kim E."/>
            <person name="Thompson L.S."/>
            <person name="Nolan M."/>
            <person name="Land M."/>
            <person name="Copeland A."/>
            <person name="Lapidus A."/>
            <person name="Lucas S."/>
            <person name="Detter C."/>
            <person name="Zhulin I.B."/>
            <person name="Olsen G.J."/>
            <person name="Whitman W."/>
            <person name="Mukhopadhyay B."/>
            <person name="Bristow J."/>
            <person name="Kyrpides N."/>
        </authorList>
    </citation>
    <scope>NUCLEOTIDE SEQUENCE [LARGE SCALE GENOMIC DNA]</scope>
    <source>
        <strain>DSM 2475 / Hrk 5</strain>
    </source>
</reference>
<evidence type="ECO:0000255" key="1">
    <source>
        <dbReference type="HAMAP-Rule" id="MF_00645"/>
    </source>
</evidence>
<sequence length="213" mass="23797">MGRLSAEEGALLVRLARRAVEEYLENARVIEPPRDTPPSLREKSGVFVTIEKILVDPLARRARRELRGCIGYPEPVLPLAEATIHAAIAAATEDPRFPPMTPRELDTVVFEVSVLTKPEPVDYRSPEELPDKIKVGRDGLIVEYGAARGLLLPQVAVDEGWDPEEFLSYACLKAGLRDDAWRHGGLKVYRFQAQIFVETTPKGDVVERFLEVV</sequence>
<feature type="chain" id="PRO_1000082711" description="Protein Tpen_0748">
    <location>
        <begin position="1"/>
        <end position="213"/>
    </location>
</feature>
<feature type="domain" description="AMMECR1" evidence="1">
    <location>
        <begin position="7"/>
        <end position="207"/>
    </location>
</feature>
<keyword id="KW-1185">Reference proteome</keyword>
<proteinExistence type="inferred from homology"/>
<dbReference type="EMBL" id="CP000505">
    <property type="protein sequence ID" value="ABL78150.1"/>
    <property type="molecule type" value="Genomic_DNA"/>
</dbReference>
<dbReference type="RefSeq" id="WP_011752415.1">
    <property type="nucleotide sequence ID" value="NC_008698.1"/>
</dbReference>
<dbReference type="SMR" id="A1RY70"/>
<dbReference type="STRING" id="368408.Tpen_0748"/>
<dbReference type="EnsemblBacteria" id="ABL78150">
    <property type="protein sequence ID" value="ABL78150"/>
    <property type="gene ID" value="Tpen_0748"/>
</dbReference>
<dbReference type="GeneID" id="4600399"/>
<dbReference type="KEGG" id="tpe:Tpen_0748"/>
<dbReference type="eggNOG" id="arCOG01336">
    <property type="taxonomic scope" value="Archaea"/>
</dbReference>
<dbReference type="HOGENOM" id="CLU_095686_1_1_2"/>
<dbReference type="OrthoDB" id="25187at2157"/>
<dbReference type="Proteomes" id="UP000000641">
    <property type="component" value="Chromosome"/>
</dbReference>
<dbReference type="Gene3D" id="3.30.700.20">
    <property type="entry name" value="Hypothetical protein ph0010, domain 1"/>
    <property type="match status" value="1"/>
</dbReference>
<dbReference type="Gene3D" id="3.30.1490.150">
    <property type="entry name" value="Hypothetical protein ph0010, domain 2"/>
    <property type="match status" value="1"/>
</dbReference>
<dbReference type="HAMAP" id="MF_00645">
    <property type="entry name" value="AMMECR1"/>
    <property type="match status" value="1"/>
</dbReference>
<dbReference type="InterPro" id="IPR023473">
    <property type="entry name" value="AMMECR1"/>
</dbReference>
<dbReference type="InterPro" id="IPR036071">
    <property type="entry name" value="AMMECR1_dom_sf"/>
</dbReference>
<dbReference type="InterPro" id="IPR002733">
    <property type="entry name" value="AMMECR1_domain"/>
</dbReference>
<dbReference type="InterPro" id="IPR027485">
    <property type="entry name" value="AMMECR1_N"/>
</dbReference>
<dbReference type="InterPro" id="IPR027623">
    <property type="entry name" value="AmmeMemoSam_A"/>
</dbReference>
<dbReference type="InterPro" id="IPR023472">
    <property type="entry name" value="Uncharacterised_MJ0810"/>
</dbReference>
<dbReference type="NCBIfam" id="TIGR04335">
    <property type="entry name" value="AmmeMemoSam_A"/>
    <property type="match status" value="1"/>
</dbReference>
<dbReference type="NCBIfam" id="TIGR00296">
    <property type="entry name" value="TIGR00296 family protein"/>
    <property type="match status" value="1"/>
</dbReference>
<dbReference type="PANTHER" id="PTHR13016:SF0">
    <property type="entry name" value="AMME SYNDROME CANDIDATE GENE 1 PROTEIN"/>
    <property type="match status" value="1"/>
</dbReference>
<dbReference type="PANTHER" id="PTHR13016">
    <property type="entry name" value="AMMECR1 HOMOLOG"/>
    <property type="match status" value="1"/>
</dbReference>
<dbReference type="Pfam" id="PF01871">
    <property type="entry name" value="AMMECR1"/>
    <property type="match status" value="1"/>
</dbReference>
<dbReference type="SUPFAM" id="SSF143447">
    <property type="entry name" value="AMMECR1-like"/>
    <property type="match status" value="1"/>
</dbReference>
<dbReference type="PROSITE" id="PS51112">
    <property type="entry name" value="AMMECR1"/>
    <property type="match status" value="1"/>
</dbReference>
<accession>A1RY70</accession>
<name>Y748_THEPD</name>